<comment type="catalytic activity">
    <reaction>
        <text>Endohydrolysis of (1-&gt;4)-beta-D-glucosidic linkages in cellulose, lichenin and cereal beta-D-glucans.</text>
        <dbReference type="EC" id="3.2.1.4"/>
    </reaction>
</comment>
<comment type="PTM">
    <text>A short form (EG-A-S) arises from post-translational proteolysis of approximately 150 AA at the C-terminus of EG-A-L.</text>
</comment>
<comment type="similarity">
    <text evidence="4">Belongs to the glycosyl hydrolase 44 (cellulase J) family.</text>
</comment>
<dbReference type="EC" id="3.2.1.4"/>
<dbReference type="EMBL" id="M76588">
    <property type="protein sequence ID" value="AAA22303.1"/>
    <property type="molecule type" value="Genomic_DNA"/>
</dbReference>
<dbReference type="PIR" id="B41897">
    <property type="entry name" value="B41897"/>
</dbReference>
<dbReference type="SMR" id="P29719"/>
<dbReference type="CAZy" id="CBM3">
    <property type="family name" value="Carbohydrate-Binding Module Family 3"/>
</dbReference>
<dbReference type="CAZy" id="GH44">
    <property type="family name" value="Glycoside Hydrolase Family 44"/>
</dbReference>
<dbReference type="GO" id="GO:0008810">
    <property type="term" value="F:cellulase activity"/>
    <property type="evidence" value="ECO:0007669"/>
    <property type="project" value="UniProtKB-EC"/>
</dbReference>
<dbReference type="GO" id="GO:0030248">
    <property type="term" value="F:cellulose binding"/>
    <property type="evidence" value="ECO:0007669"/>
    <property type="project" value="InterPro"/>
</dbReference>
<dbReference type="GO" id="GO:0030245">
    <property type="term" value="P:cellulose catabolic process"/>
    <property type="evidence" value="ECO:0007669"/>
    <property type="project" value="UniProtKB-KW"/>
</dbReference>
<dbReference type="Gene3D" id="2.60.40.710">
    <property type="entry name" value="Endoglucanase-like"/>
    <property type="match status" value="1"/>
</dbReference>
<dbReference type="Gene3D" id="3.20.20.80">
    <property type="entry name" value="Glycosidases"/>
    <property type="match status" value="1"/>
</dbReference>
<dbReference type="Gene3D" id="2.60.40.1180">
    <property type="entry name" value="Golgi alpha-mannosidase II"/>
    <property type="match status" value="1"/>
</dbReference>
<dbReference type="InterPro" id="IPR008965">
    <property type="entry name" value="CBM2/CBM3_carb-bd_dom_sf"/>
</dbReference>
<dbReference type="InterPro" id="IPR001956">
    <property type="entry name" value="CBM3"/>
</dbReference>
<dbReference type="InterPro" id="IPR036966">
    <property type="entry name" value="CBM3_sf"/>
</dbReference>
<dbReference type="InterPro" id="IPR024745">
    <property type="entry name" value="GH44_cat"/>
</dbReference>
<dbReference type="InterPro" id="IPR013780">
    <property type="entry name" value="Glyco_hydro_b"/>
</dbReference>
<dbReference type="InterPro" id="IPR017853">
    <property type="entry name" value="Glycoside_hydrolase_SF"/>
</dbReference>
<dbReference type="Pfam" id="PF00942">
    <property type="entry name" value="CBM_3"/>
    <property type="match status" value="1"/>
</dbReference>
<dbReference type="Pfam" id="PF12891">
    <property type="entry name" value="Glyco_hydro_44"/>
    <property type="match status" value="1"/>
</dbReference>
<dbReference type="SMART" id="SM01067">
    <property type="entry name" value="CBM_3"/>
    <property type="match status" value="1"/>
</dbReference>
<dbReference type="SUPFAM" id="SSF51445">
    <property type="entry name" value="(Trans)glycosidases"/>
    <property type="match status" value="1"/>
</dbReference>
<dbReference type="SUPFAM" id="SSF49384">
    <property type="entry name" value="Carbohydrate-binding domain"/>
    <property type="match status" value="1"/>
</dbReference>
<dbReference type="SUPFAM" id="SSF51011">
    <property type="entry name" value="Glycosyl hydrolase domain"/>
    <property type="match status" value="1"/>
</dbReference>
<dbReference type="PROSITE" id="PS51172">
    <property type="entry name" value="CBM3"/>
    <property type="match status" value="1"/>
</dbReference>
<proteinExistence type="inferred from homology"/>
<protein>
    <recommendedName>
        <fullName>Endoglucanase A</fullName>
        <ecNumber>3.2.1.4</ecNumber>
    </recommendedName>
    <alternativeName>
        <fullName>Cellulase A</fullName>
    </alternativeName>
    <alternativeName>
        <fullName>EG-A</fullName>
    </alternativeName>
    <alternativeName>
        <fullName>Endo-1,4-beta-glucanase</fullName>
    </alternativeName>
</protein>
<reference key="1">
    <citation type="journal article" date="1992" name="J. Bacteriol.">
        <title>celA from Bacillus lautus PL236 encodes a novel cellulose-binding endo-beta-1,4-glucanase.</title>
        <authorList>
            <person name="Hansen C.K."/>
            <person name="Diderichsen B."/>
            <person name="Joergensen P.L."/>
        </authorList>
    </citation>
    <scope>NUCLEOTIDE SEQUENCE [GENOMIC DNA]</scope>
    <source>
        <strain>PL236</strain>
    </source>
</reference>
<name>GUNA_PAELA</name>
<sequence length="700" mass="76910">MKTRQRKRLFVSAALAVSLTMTVPMPASVNAAASDVTFTINTQSERAAISPNIYGTNQDLSGTENWSSRRLGGNRLTGYNWENNASSAGRDWLHYSDDFLCGNGGVPDTDCDKPGAVVTAFHDKSLENGAYSIVTLQMAGYVSRDKNGPVDESETAPSPRWDKVEFAKNAPFSLQPHLNDGQVYMDEEVNFLVNRYGNASTSTGIKAYSLDNEPALWSETHPRIHPEQLQAAELVAKSIDLSKAVKNVDPHAEIFGPALYGFGAYLSLQDAPGWPSLQGNYSWFIDYYLDQMKNAHTQNGKRLLDVLDVHWYPEAQGGGQRIVFGGAGNIDTQKARVQAPRSLWDPAYQEDSWIGTWFSSYLPLIPKLQSSIQTYYPGTKLAITESSYGGDNHISGGIATADALGIFGKYGVYAANYWQTEDNTDYTSAAYKLYRNYDGNKSGFGSIKVDAATSDTENSSVYASVTDEENSELHLIVLNKNFDDPINATFQLSGDKTYTSGRVWGFDQTGSDITEQAAITNINNNQFTYTLPPLSAYHIVLKADSTEPVNSDLVVQYKDGDRNNATDNQIKPHFNIQNKGTSPVDLSSLTLRYYFTKDSSAAMNGWIDWAKLGGSNIQISFGNHNGADSDTYAELGFSSGAGSIAEGGQSGEIQLRMSKADWSNFNEANDYSFDGAKTAYIDWDRVTLYQDGQLVWGIEP</sequence>
<organism>
    <name type="scientific">Paenibacillus lautus</name>
    <name type="common">Bacillus lautus</name>
    <dbReference type="NCBI Taxonomy" id="1401"/>
    <lineage>
        <taxon>Bacteria</taxon>
        <taxon>Bacillati</taxon>
        <taxon>Bacillota</taxon>
        <taxon>Bacilli</taxon>
        <taxon>Bacillales</taxon>
        <taxon>Paenibacillaceae</taxon>
        <taxon>Paenibacillus</taxon>
    </lineage>
</organism>
<gene>
    <name type="primary">celA</name>
</gene>
<keyword id="KW-0119">Carbohydrate metabolism</keyword>
<keyword id="KW-0136">Cellulose degradation</keyword>
<keyword id="KW-0326">Glycosidase</keyword>
<keyword id="KW-0378">Hydrolase</keyword>
<keyword id="KW-0624">Polysaccharide degradation</keyword>
<keyword id="KW-0732">Signal</keyword>
<evidence type="ECO:0000250" key="1"/>
<evidence type="ECO:0000255" key="2"/>
<evidence type="ECO:0000255" key="3">
    <source>
        <dbReference type="PROSITE-ProRule" id="PRU00513"/>
    </source>
</evidence>
<evidence type="ECO:0000305" key="4"/>
<accession>P29719</accession>
<feature type="signal peptide" evidence="2">
    <location>
        <begin position="1"/>
        <end position="33"/>
    </location>
</feature>
<feature type="chain" id="PRO_0000008021" description="Endoglucanase A">
    <location>
        <begin position="34"/>
        <end position="700"/>
    </location>
</feature>
<feature type="domain" description="CBM3" evidence="3">
    <location>
        <begin position="550"/>
        <end position="700"/>
    </location>
</feature>
<feature type="active site" evidence="1">
    <location>
        <position position="213"/>
    </location>
</feature>